<proteinExistence type="inferred from homology"/>
<sequence>MLQLTTYRNLQVFLVIMTAIGMSFALFFLQRYMGFSPCPLCIFQRIGLMIMGGFALIAALFHPKSMVIRLLLWLGSLAGIGWAAIVAGRHVWLQHLPADQVPSCGPGLDYWLDTLPMQQVLKEVFAGSGECASIDWTFLGLSIPEQSLILFSILILTHLLILWRIVRPATPKPLAR</sequence>
<name>DSBB_PSYCK</name>
<evidence type="ECO:0000255" key="1">
    <source>
        <dbReference type="HAMAP-Rule" id="MF_00286"/>
    </source>
</evidence>
<feature type="chain" id="PRO_0000298397" description="Disulfide bond formation protein B">
    <location>
        <begin position="1"/>
        <end position="176"/>
    </location>
</feature>
<feature type="topological domain" description="Cytoplasmic" evidence="1">
    <location>
        <begin position="1"/>
        <end position="11"/>
    </location>
</feature>
<feature type="transmembrane region" description="Helical" evidence="1">
    <location>
        <begin position="12"/>
        <end position="28"/>
    </location>
</feature>
<feature type="topological domain" description="Periplasmic" evidence="1">
    <location>
        <begin position="29"/>
        <end position="46"/>
    </location>
</feature>
<feature type="transmembrane region" description="Helical" evidence="1">
    <location>
        <begin position="47"/>
        <end position="63"/>
    </location>
</feature>
<feature type="topological domain" description="Cytoplasmic" evidence="1">
    <location>
        <begin position="64"/>
        <end position="70"/>
    </location>
</feature>
<feature type="transmembrane region" description="Helical" evidence="1">
    <location>
        <begin position="71"/>
        <end position="88"/>
    </location>
</feature>
<feature type="topological domain" description="Periplasmic" evidence="1">
    <location>
        <begin position="89"/>
        <end position="145"/>
    </location>
</feature>
<feature type="transmembrane region" description="Helical" evidence="1">
    <location>
        <begin position="146"/>
        <end position="164"/>
    </location>
</feature>
<feature type="topological domain" description="Cytoplasmic" evidence="1">
    <location>
        <begin position="165"/>
        <end position="176"/>
    </location>
</feature>
<feature type="disulfide bond" description="Redox-active" evidence="1">
    <location>
        <begin position="38"/>
        <end position="41"/>
    </location>
</feature>
<feature type="disulfide bond" description="Redox-active" evidence="1">
    <location>
        <begin position="104"/>
        <end position="131"/>
    </location>
</feature>
<gene>
    <name evidence="1" type="primary">dsbB</name>
    <name type="ordered locus">Pcryo_0042</name>
</gene>
<protein>
    <recommendedName>
        <fullName evidence="1">Disulfide bond formation protein B</fullName>
    </recommendedName>
    <alternativeName>
        <fullName evidence="1">Disulfide oxidoreductase</fullName>
    </alternativeName>
</protein>
<organism>
    <name type="scientific">Psychrobacter cryohalolentis (strain ATCC BAA-1226 / DSM 17306 / VKM B-2378 / K5)</name>
    <dbReference type="NCBI Taxonomy" id="335284"/>
    <lineage>
        <taxon>Bacteria</taxon>
        <taxon>Pseudomonadati</taxon>
        <taxon>Pseudomonadota</taxon>
        <taxon>Gammaproteobacteria</taxon>
        <taxon>Moraxellales</taxon>
        <taxon>Moraxellaceae</taxon>
        <taxon>Psychrobacter</taxon>
    </lineage>
</organism>
<reference key="1">
    <citation type="submission" date="2006-03" db="EMBL/GenBank/DDBJ databases">
        <title>Complete sequence of chromosome of Psychrobacter cryohalolentis K5.</title>
        <authorList>
            <consortium name="US DOE Joint Genome Institute"/>
            <person name="Copeland A."/>
            <person name="Lucas S."/>
            <person name="Lapidus A."/>
            <person name="Barry K."/>
            <person name="Detter J.C."/>
            <person name="Glavina T."/>
            <person name="Hammon N."/>
            <person name="Israni S."/>
            <person name="Dalin E."/>
            <person name="Tice H."/>
            <person name="Pitluck S."/>
            <person name="Brettin T."/>
            <person name="Bruce D."/>
            <person name="Han C."/>
            <person name="Tapia R."/>
            <person name="Sims D.R."/>
            <person name="Gilna P."/>
            <person name="Schmutz J."/>
            <person name="Larimer F."/>
            <person name="Land M."/>
            <person name="Hauser L."/>
            <person name="Kyrpides N."/>
            <person name="Kim E."/>
            <person name="Richardson P."/>
        </authorList>
    </citation>
    <scope>NUCLEOTIDE SEQUENCE [LARGE SCALE GENOMIC DNA]</scope>
    <source>
        <strain>ATCC BAA-1226 / DSM 17306 / VKM B-2378 / K5</strain>
    </source>
</reference>
<accession>Q1QES7</accession>
<comment type="function">
    <text evidence="1">Required for disulfide bond formation in some periplasmic proteins. Acts by oxidizing the DsbA protein.</text>
</comment>
<comment type="subcellular location">
    <subcellularLocation>
        <location evidence="1">Cell inner membrane</location>
        <topology evidence="1">Multi-pass membrane protein</topology>
    </subcellularLocation>
</comment>
<comment type="similarity">
    <text evidence="1">Belongs to the DsbB family.</text>
</comment>
<dbReference type="EMBL" id="CP000323">
    <property type="protein sequence ID" value="ABE73826.1"/>
    <property type="molecule type" value="Genomic_DNA"/>
</dbReference>
<dbReference type="RefSeq" id="WP_011512418.1">
    <property type="nucleotide sequence ID" value="NC_007969.1"/>
</dbReference>
<dbReference type="SMR" id="Q1QES7"/>
<dbReference type="STRING" id="335284.Pcryo_0042"/>
<dbReference type="KEGG" id="pcr:Pcryo_0042"/>
<dbReference type="eggNOG" id="COG1495">
    <property type="taxonomic scope" value="Bacteria"/>
</dbReference>
<dbReference type="HOGENOM" id="CLU_098660_1_1_6"/>
<dbReference type="Proteomes" id="UP000002425">
    <property type="component" value="Chromosome"/>
</dbReference>
<dbReference type="GO" id="GO:0005886">
    <property type="term" value="C:plasma membrane"/>
    <property type="evidence" value="ECO:0007669"/>
    <property type="project" value="UniProtKB-SubCell"/>
</dbReference>
<dbReference type="GO" id="GO:0009055">
    <property type="term" value="F:electron transfer activity"/>
    <property type="evidence" value="ECO:0007669"/>
    <property type="project" value="UniProtKB-UniRule"/>
</dbReference>
<dbReference type="GO" id="GO:0015035">
    <property type="term" value="F:protein-disulfide reductase activity"/>
    <property type="evidence" value="ECO:0007669"/>
    <property type="project" value="UniProtKB-UniRule"/>
</dbReference>
<dbReference type="GO" id="GO:0006457">
    <property type="term" value="P:protein folding"/>
    <property type="evidence" value="ECO:0007669"/>
    <property type="project" value="InterPro"/>
</dbReference>
<dbReference type="Gene3D" id="1.20.1550.10">
    <property type="entry name" value="DsbB-like"/>
    <property type="match status" value="1"/>
</dbReference>
<dbReference type="HAMAP" id="MF_00286">
    <property type="entry name" value="DsbB"/>
    <property type="match status" value="1"/>
</dbReference>
<dbReference type="InterPro" id="IPR003752">
    <property type="entry name" value="DiS_bond_form_DsbB/BdbC"/>
</dbReference>
<dbReference type="InterPro" id="IPR022920">
    <property type="entry name" value="Disulphide_bond_form_DsbB"/>
</dbReference>
<dbReference type="InterPro" id="IPR050183">
    <property type="entry name" value="DsbB"/>
</dbReference>
<dbReference type="InterPro" id="IPR023380">
    <property type="entry name" value="DsbB-like_sf"/>
</dbReference>
<dbReference type="PANTHER" id="PTHR36570">
    <property type="entry name" value="DISULFIDE BOND FORMATION PROTEIN B"/>
    <property type="match status" value="1"/>
</dbReference>
<dbReference type="PANTHER" id="PTHR36570:SF3">
    <property type="entry name" value="DISULFIDE BOND FORMATION PROTEIN B"/>
    <property type="match status" value="1"/>
</dbReference>
<dbReference type="Pfam" id="PF02600">
    <property type="entry name" value="DsbB"/>
    <property type="match status" value="1"/>
</dbReference>
<dbReference type="SUPFAM" id="SSF158442">
    <property type="entry name" value="DsbB-like"/>
    <property type="match status" value="1"/>
</dbReference>
<keyword id="KW-0997">Cell inner membrane</keyword>
<keyword id="KW-1003">Cell membrane</keyword>
<keyword id="KW-0143">Chaperone</keyword>
<keyword id="KW-1015">Disulfide bond</keyword>
<keyword id="KW-0249">Electron transport</keyword>
<keyword id="KW-0472">Membrane</keyword>
<keyword id="KW-0560">Oxidoreductase</keyword>
<keyword id="KW-0676">Redox-active center</keyword>
<keyword id="KW-0812">Transmembrane</keyword>
<keyword id="KW-1133">Transmembrane helix</keyword>
<keyword id="KW-0813">Transport</keyword>